<protein>
    <recommendedName>
        <fullName>Pulmonary surfactant-associated protein B</fullName>
        <shortName>SP-B</shortName>
    </recommendedName>
    <alternativeName>
        <fullName>18 kDa pulmonary-surfactant protein</fullName>
    </alternativeName>
    <alternativeName>
        <fullName>6 kDa protein</fullName>
    </alternativeName>
    <alternativeName>
        <fullName>Pulmonary surfactant-associated proteolipid SPL(Phe)</fullName>
    </alternativeName>
</protein>
<organism>
    <name type="scientific">Homo sapiens</name>
    <name type="common">Human</name>
    <dbReference type="NCBI Taxonomy" id="9606"/>
    <lineage>
        <taxon>Eukaryota</taxon>
        <taxon>Metazoa</taxon>
        <taxon>Chordata</taxon>
        <taxon>Craniata</taxon>
        <taxon>Vertebrata</taxon>
        <taxon>Euteleostomi</taxon>
        <taxon>Mammalia</taxon>
        <taxon>Eutheria</taxon>
        <taxon>Euarchontoglires</taxon>
        <taxon>Primates</taxon>
        <taxon>Haplorrhini</taxon>
        <taxon>Catarrhini</taxon>
        <taxon>Hominidae</taxon>
        <taxon>Homo</taxon>
    </lineage>
</organism>
<proteinExistence type="evidence at protein level"/>
<sequence>MAESHLLQWLLLLLPTLCGPGTAAWTTSSLACAQGPEFWCQSLEQALQCRALGHCLQEVWGHVGADDLCQECEDIVHILNKMAKEAIFQDTMRKFLEQECNVLPLKLLMPQCNQVLDDYFPLVIDYFQNQTDSNGICMHLGLCKSRQPEPEQEPGMSDPLPKPLRDPLPDPLLDKLVLPVLPGALQARPGPHTQDLSEQQFPIPLPYCWLCRALIKRIQAMIPKGALAVAVAQVCRVVPLVAGGICQCLAERYSVILLDTLLGRMLPQLVCRLVLRCSMDDSAGPRSPTGEWLPRDSECHLCMSVTTQAGNSSEQAIPQAMLQACVGSWLDREKCKQFVEQHTPQLLTLVPRGWDAHTTCQALGVCGTMSSPLQCIHSPDL</sequence>
<gene>
    <name type="primary">SFTPB</name>
    <name type="synonym">SFTP3</name>
</gene>
<comment type="function">
    <text>Pulmonary surfactant-associated proteins promote alveolar stability by lowering the surface tension at the air-liquid interface in the peripheral air spaces. SP-B increases the collapse pressure of palmitic acid to nearly 70 millinewtons per meter.</text>
</comment>
<comment type="subunit">
    <text evidence="6">Homodimer; disulfide-linked.</text>
</comment>
<comment type="interaction">
    <interactant intactId="EBI-14955352">
        <id>P07988</id>
    </interactant>
    <interactant intactId="EBI-16439278">
        <id>Q6FHY5</id>
        <label>MEOX2</label>
    </interactant>
    <organismsDiffer>false</organismsDiffer>
    <experiments>3</experiments>
</comment>
<comment type="subcellular location">
    <subcellularLocation>
        <location>Secreted</location>
        <location>Extracellular space</location>
        <location>Surface film</location>
    </subcellularLocation>
</comment>
<comment type="disease" evidence="9">
    <disease id="DI-00960">
        <name>Pulmonary surfactant metabolism dysfunction 1</name>
        <acronym>SMDP1</acronym>
        <description>A rare lung disorder due to impaired surfactant homeostasis. It is characterized by alveolar filling with floccular material that stains positive using the periodic acid-Schiff method and is derived from surfactant phospholipids and protein components. Excessive lipoproteins accumulation in the alveoli results in severe respiratory distress.</description>
        <dbReference type="MIM" id="265120"/>
    </disease>
    <text>The disease is caused by variants affecting the gene represented in this entry.</text>
</comment>
<comment type="disease" evidence="4">
    <disease id="DI-02716">
        <name>Respiratory distress syndrome in premature infants</name>
        <acronym>RDS</acronym>
        <description>A lung disease affecting usually premature newborn infants. It is characterized by deficient gas exchange, diffuse atelectasis, high-permeability lung edema and fibrin-rich alveolar deposits called 'hyaline membranes'.</description>
        <dbReference type="MIM" id="267450"/>
    </disease>
    <text>Disease susceptibility may be associated with variants affecting the gene represented in this entry. A variation Ile to Thr at position 131 influences the association between specific alleles of SFTPA1 and respiratory distress syndrome in premature infants.</text>
</comment>
<comment type="miscellaneous">
    <text>Pulmonary surfactant consists of 90% lipid and 10% protein. There are 4 surfactant-associated proteins: 2 collagenous, carbohydrate-binding glycoproteins (SP-A and SP-D) and 2 small hydrophobic proteins (SP-B and SP-C).</text>
</comment>
<comment type="sequence caution" evidence="11">
    <conflict type="erroneous initiation">
        <sequence resource="EMBL-CDS" id="AAA88099"/>
    </conflict>
</comment>
<feature type="signal peptide" evidence="1">
    <location>
        <begin position="1"/>
        <end position="24"/>
    </location>
</feature>
<feature type="propeptide" id="PRO_0000031647">
    <location>
        <begin position="25"/>
        <end position="200"/>
    </location>
</feature>
<feature type="chain" id="PRO_0000031648" description="Pulmonary surfactant-associated protein B">
    <location>
        <begin position="201"/>
        <end position="279"/>
    </location>
</feature>
<feature type="propeptide" id="PRO_0000031649">
    <location>
        <begin position="280"/>
        <end position="381"/>
    </location>
</feature>
<feature type="domain" description="Saposin A-type" evidence="2">
    <location>
        <begin position="25"/>
        <end position="65"/>
    </location>
</feature>
<feature type="domain" description="Saposin B-type 1" evidence="3">
    <location>
        <begin position="65"/>
        <end position="147"/>
    </location>
</feature>
<feature type="domain" description="Saposin B-type 2" evidence="3">
    <location>
        <begin position="204"/>
        <end position="281"/>
    </location>
</feature>
<feature type="domain" description="Saposin B-type 3" evidence="3">
    <location>
        <begin position="295"/>
        <end position="370"/>
    </location>
</feature>
<feature type="glycosylation site" description="N-linked (GlcNAc...) asparagine" evidence="3">
    <location>
        <position position="129"/>
    </location>
</feature>
<feature type="glycosylation site" description="N-linked (GlcNAc...) asparagine" evidence="3">
    <location>
        <position position="311"/>
    </location>
</feature>
<feature type="disulfide bond" evidence="3">
    <location>
        <begin position="69"/>
        <end position="143"/>
    </location>
</feature>
<feature type="disulfide bond" evidence="3">
    <location>
        <begin position="72"/>
        <end position="137"/>
    </location>
</feature>
<feature type="disulfide bond" evidence="3">
    <location>
        <begin position="100"/>
        <end position="112"/>
    </location>
</feature>
<feature type="disulfide bond" evidence="3 6">
    <location>
        <begin position="208"/>
        <end position="277"/>
    </location>
</feature>
<feature type="disulfide bond" evidence="3 6">
    <location>
        <begin position="211"/>
        <end position="271"/>
    </location>
</feature>
<feature type="disulfide bond" evidence="3 6">
    <location>
        <begin position="235"/>
        <end position="246"/>
    </location>
</feature>
<feature type="disulfide bond" description="Interchain" evidence="3 6">
    <location>
        <position position="248"/>
    </location>
</feature>
<feature type="disulfide bond" evidence="3">
    <location>
        <begin position="299"/>
        <end position="366"/>
    </location>
</feature>
<feature type="disulfide bond" evidence="3">
    <location>
        <begin position="302"/>
        <end position="360"/>
    </location>
</feature>
<feature type="disulfide bond" evidence="3">
    <location>
        <begin position="325"/>
        <end position="335"/>
    </location>
</feature>
<feature type="sequence variant" id="VAR_006948" description="In dbSNP:rs1130866." evidence="5 10">
    <original>T</original>
    <variation>I</variation>
    <location>
        <position position="131"/>
    </location>
</feature>
<feature type="sequence variant" id="VAR_013099" description="In dbSNP:rs3024801." evidence="10">
    <original>L</original>
    <variation>F</variation>
    <location>
        <position position="176"/>
    </location>
</feature>
<feature type="sequence variant" id="VAR_006950" description="Requires 2 nucleotide substitutions." evidence="6">
    <original>A</original>
    <variation>I</variation>
    <location>
        <position position="228"/>
    </location>
</feature>
<feature type="sequence variant" id="VAR_006949" description="Requires 2 nucleotide substitutions." evidence="7 8">
    <original>A</original>
    <variation>R</variation>
    <location>
        <position position="228"/>
    </location>
</feature>
<feature type="sequence variant" id="VAR_036856" description="In SMDP1; dbSNP:rs137853202." evidence="9">
    <original>R</original>
    <variation>C</variation>
    <location>
        <position position="236"/>
    </location>
</feature>
<feature type="sequence variant" id="VAR_013100" description="In dbSNP:rs3024809." evidence="10">
    <original>R</original>
    <variation>H</variation>
    <location>
        <position position="272"/>
    </location>
</feature>
<feature type="sequence conflict" description="In Ref. 6; AAA36628." evidence="11" ref="6">
    <original>L</original>
    <variation>V</variation>
    <location>
        <position position="178"/>
    </location>
</feature>
<feature type="sequence conflict" description="In Ref. 5; AAA88099." evidence="11" ref="5">
    <original>P</original>
    <variation>L</variation>
    <location>
        <position position="318"/>
    </location>
</feature>
<feature type="helix" evidence="12">
    <location>
        <begin position="213"/>
        <end position="221"/>
    </location>
</feature>
<feature type="helix" evidence="14">
    <location>
        <begin position="260"/>
        <end position="263"/>
    </location>
</feature>
<feature type="strand" evidence="13">
    <location>
        <begin position="265"/>
        <end position="268"/>
    </location>
</feature>
<feature type="helix" evidence="13">
    <location>
        <begin position="269"/>
        <end position="276"/>
    </location>
</feature>
<accession>P07988</accession>
<accession>Q96R04</accession>
<dbReference type="EMBL" id="J02761">
    <property type="protein sequence ID" value="AAA60212.1"/>
    <property type="molecule type" value="mRNA"/>
</dbReference>
<dbReference type="EMBL" id="M24461">
    <property type="protein sequence ID" value="AAB59541.1"/>
    <property type="molecule type" value="Genomic_DNA"/>
</dbReference>
<dbReference type="EMBL" id="AF400074">
    <property type="protein sequence ID" value="AAK77913.1"/>
    <property type="molecule type" value="Genomic_DNA"/>
</dbReference>
<dbReference type="EMBL" id="BC032785">
    <property type="protein sequence ID" value="AAH32785.1"/>
    <property type="molecule type" value="mRNA"/>
</dbReference>
<dbReference type="EMBL" id="M16764">
    <property type="protein sequence ID" value="AAA88099.1"/>
    <property type="status" value="ALT_INIT"/>
    <property type="molecule type" value="mRNA"/>
</dbReference>
<dbReference type="EMBL" id="M19097">
    <property type="protein sequence ID" value="AAA36628.1"/>
    <property type="molecule type" value="mRNA"/>
</dbReference>
<dbReference type="CCDS" id="CCDS1983.3"/>
<dbReference type="PIR" id="A31361">
    <property type="entry name" value="LNHUB"/>
</dbReference>
<dbReference type="RefSeq" id="NP_000533.3">
    <property type="nucleotide sequence ID" value="NM_000542.3"/>
</dbReference>
<dbReference type="RefSeq" id="NP_942140.3">
    <property type="nucleotide sequence ID" value="NM_198843.3"/>
</dbReference>
<dbReference type="PDB" id="1DFW">
    <property type="method" value="IR"/>
    <property type="chains" value="A=201-225"/>
</dbReference>
<dbReference type="PDB" id="1KMR">
    <property type="method" value="NMR"/>
    <property type="chains" value="A=211-225"/>
</dbReference>
<dbReference type="PDB" id="1RG3">
    <property type="method" value="NMR"/>
    <property type="chains" value="A=263-278"/>
</dbReference>
<dbReference type="PDB" id="1RG4">
    <property type="method" value="NMR"/>
    <property type="chains" value="A=263-278"/>
</dbReference>
<dbReference type="PDB" id="1SSZ">
    <property type="method" value="IR"/>
    <property type="chains" value="A=208-278"/>
</dbReference>
<dbReference type="PDB" id="2DWF">
    <property type="method" value="NMR"/>
    <property type="chains" value="A=208-278"/>
</dbReference>
<dbReference type="PDB" id="2JOU">
    <property type="method" value="NMR"/>
    <property type="chains" value="A=208-278"/>
</dbReference>
<dbReference type="PDB" id="2M0H">
    <property type="method" value="NMR"/>
    <property type="chains" value="A=259-280"/>
</dbReference>
<dbReference type="PDB" id="2M1T">
    <property type="method" value="NMR"/>
    <property type="chains" value="A=259-278"/>
</dbReference>
<dbReference type="PDBsum" id="1DFW"/>
<dbReference type="PDBsum" id="1KMR"/>
<dbReference type="PDBsum" id="1RG3"/>
<dbReference type="PDBsum" id="1RG4"/>
<dbReference type="PDBsum" id="1SSZ"/>
<dbReference type="PDBsum" id="2DWF"/>
<dbReference type="PDBsum" id="2JOU"/>
<dbReference type="PDBsum" id="2M0H"/>
<dbReference type="PDBsum" id="2M1T"/>
<dbReference type="BMRB" id="P07988"/>
<dbReference type="PCDDB" id="P07988"/>
<dbReference type="SMR" id="P07988"/>
<dbReference type="BioGRID" id="112337">
    <property type="interactions" value="2"/>
</dbReference>
<dbReference type="FunCoup" id="P07988">
    <property type="interactions" value="25"/>
</dbReference>
<dbReference type="IntAct" id="P07988">
    <property type="interactions" value="1"/>
</dbReference>
<dbReference type="STRING" id="9606.ENSP00000499683"/>
<dbReference type="GlyCosmos" id="P07988">
    <property type="glycosylation" value="2 sites, No reported glycans"/>
</dbReference>
<dbReference type="GlyGen" id="P07988">
    <property type="glycosylation" value="4 sites"/>
</dbReference>
<dbReference type="iPTMnet" id="P07988"/>
<dbReference type="PhosphoSitePlus" id="P07988"/>
<dbReference type="SwissPalm" id="P07988"/>
<dbReference type="BioMuta" id="SFTPB"/>
<dbReference type="DMDM" id="131418"/>
<dbReference type="MassIVE" id="P07988"/>
<dbReference type="PaxDb" id="9606-ENSP00000386346"/>
<dbReference type="PeptideAtlas" id="P07988"/>
<dbReference type="ProteomicsDB" id="52054"/>
<dbReference type="Antibodypedia" id="31946">
    <property type="antibodies" value="363 antibodies from 31 providers"/>
</dbReference>
<dbReference type="DNASU" id="6439"/>
<dbReference type="Ensembl" id="ENST00000393822.7">
    <property type="protein sequence ID" value="ENSP00000377409.4"/>
    <property type="gene ID" value="ENSG00000168878.19"/>
</dbReference>
<dbReference type="Ensembl" id="ENST00000409383.6">
    <property type="protein sequence ID" value="ENSP00000386346.2"/>
    <property type="gene ID" value="ENSG00000168878.19"/>
</dbReference>
<dbReference type="Ensembl" id="ENST00000519937.7">
    <property type="protein sequence ID" value="ENSP00000428719.2"/>
    <property type="gene ID" value="ENSG00000168878.19"/>
</dbReference>
<dbReference type="GeneID" id="6439"/>
<dbReference type="KEGG" id="hsa:6439"/>
<dbReference type="MANE-Select" id="ENST00000519937.7">
    <property type="protein sequence ID" value="ENSP00000428719.2"/>
    <property type="RefSeq nucleotide sequence ID" value="NM_000542.5"/>
    <property type="RefSeq protein sequence ID" value="NP_000533.4"/>
</dbReference>
<dbReference type="UCSC" id="uc061lja.1">
    <property type="organism name" value="human"/>
</dbReference>
<dbReference type="AGR" id="HGNC:10801"/>
<dbReference type="CTD" id="6439"/>
<dbReference type="DisGeNET" id="6439"/>
<dbReference type="GeneCards" id="SFTPB"/>
<dbReference type="HGNC" id="HGNC:10801">
    <property type="gene designation" value="SFTPB"/>
</dbReference>
<dbReference type="HPA" id="ENSG00000168878">
    <property type="expression patterns" value="Tissue enriched (lung)"/>
</dbReference>
<dbReference type="MalaCards" id="SFTPB"/>
<dbReference type="MIM" id="178640">
    <property type="type" value="gene"/>
</dbReference>
<dbReference type="MIM" id="265120">
    <property type="type" value="phenotype"/>
</dbReference>
<dbReference type="MIM" id="267450">
    <property type="type" value="phenotype"/>
</dbReference>
<dbReference type="neXtProt" id="NX_P07988"/>
<dbReference type="OpenTargets" id="ENSG00000168878"/>
<dbReference type="Orphanet" id="217563">
    <property type="disease" value="Neonatal acute respiratory distress syndrome"/>
</dbReference>
<dbReference type="Orphanet" id="685082">
    <property type="disease" value="Pediatric acute respiratory distress syndrome"/>
</dbReference>
<dbReference type="PharmGKB" id="PA35713"/>
<dbReference type="VEuPathDB" id="HostDB:ENSG00000168878"/>
<dbReference type="eggNOG" id="KOG1340">
    <property type="taxonomic scope" value="Eukaryota"/>
</dbReference>
<dbReference type="GeneTree" id="ENSGT00940000161711"/>
<dbReference type="InParanoid" id="P07988"/>
<dbReference type="OMA" id="PKFWCQS"/>
<dbReference type="OrthoDB" id="8889685at2759"/>
<dbReference type="PAN-GO" id="P07988">
    <property type="GO annotations" value="3 GO annotations based on evolutionary models"/>
</dbReference>
<dbReference type="PhylomeDB" id="P07988"/>
<dbReference type="PathwayCommons" id="P07988"/>
<dbReference type="Reactome" id="R-HSA-5683826">
    <property type="pathway name" value="Surfactant metabolism"/>
</dbReference>
<dbReference type="Reactome" id="R-HSA-5688031">
    <property type="pathway name" value="Defective pro-SFTPB causes SMDP1 and RDS"/>
</dbReference>
<dbReference type="Reactome" id="R-HSA-5688849">
    <property type="pathway name" value="Defective CSF2RB causes SMDP5"/>
</dbReference>
<dbReference type="Reactome" id="R-HSA-5688890">
    <property type="pathway name" value="Defective CSF2RA causes SMDP4"/>
</dbReference>
<dbReference type="SignaLink" id="P07988"/>
<dbReference type="SIGNOR" id="P07988"/>
<dbReference type="BioGRID-ORCS" id="6439">
    <property type="hits" value="15 hits in 1143 CRISPR screens"/>
</dbReference>
<dbReference type="ChiTaRS" id="SFTPB">
    <property type="organism name" value="human"/>
</dbReference>
<dbReference type="EvolutionaryTrace" id="P07988"/>
<dbReference type="GeneWiki" id="Pulmonary_surfactant-associated_protein_B"/>
<dbReference type="GenomeRNAi" id="6439"/>
<dbReference type="Pharos" id="P07988">
    <property type="development level" value="Tbio"/>
</dbReference>
<dbReference type="PRO" id="PR:P07988"/>
<dbReference type="Proteomes" id="UP000005640">
    <property type="component" value="Chromosome 2"/>
</dbReference>
<dbReference type="RNAct" id="P07988">
    <property type="molecule type" value="protein"/>
</dbReference>
<dbReference type="Bgee" id="ENSG00000168878">
    <property type="expression patterns" value="Expressed in lower lobe of lung and 176 other cell types or tissues"/>
</dbReference>
<dbReference type="ExpressionAtlas" id="P07988">
    <property type="expression patterns" value="baseline and differential"/>
</dbReference>
<dbReference type="GO" id="GO:0097208">
    <property type="term" value="C:alveolar lamellar body"/>
    <property type="evidence" value="ECO:0000318"/>
    <property type="project" value="GO_Central"/>
</dbReference>
<dbReference type="GO" id="GO:0045334">
    <property type="term" value="C:clathrin-coated endocytic vesicle"/>
    <property type="evidence" value="ECO:0000304"/>
    <property type="project" value="Reactome"/>
</dbReference>
<dbReference type="GO" id="GO:0005789">
    <property type="term" value="C:endoplasmic reticulum membrane"/>
    <property type="evidence" value="ECO:0000304"/>
    <property type="project" value="Reactome"/>
</dbReference>
<dbReference type="GO" id="GO:0005576">
    <property type="term" value="C:extracellular region"/>
    <property type="evidence" value="ECO:0000304"/>
    <property type="project" value="Reactome"/>
</dbReference>
<dbReference type="GO" id="GO:0005615">
    <property type="term" value="C:extracellular space"/>
    <property type="evidence" value="ECO:0000318"/>
    <property type="project" value="GO_Central"/>
</dbReference>
<dbReference type="GO" id="GO:0042599">
    <property type="term" value="C:lamellar body"/>
    <property type="evidence" value="ECO:0000304"/>
    <property type="project" value="Reactome"/>
</dbReference>
<dbReference type="GO" id="GO:0005764">
    <property type="term" value="C:lysosome"/>
    <property type="evidence" value="ECO:0007669"/>
    <property type="project" value="InterPro"/>
</dbReference>
<dbReference type="GO" id="GO:0005771">
    <property type="term" value="C:multivesicular body"/>
    <property type="evidence" value="ECO:0000318"/>
    <property type="project" value="GO_Central"/>
</dbReference>
<dbReference type="GO" id="GO:0097486">
    <property type="term" value="C:multivesicular body lumen"/>
    <property type="evidence" value="ECO:0000304"/>
    <property type="project" value="Reactome"/>
</dbReference>
<dbReference type="GO" id="GO:0009887">
    <property type="term" value="P:animal organ morphogenesis"/>
    <property type="evidence" value="ECO:0000304"/>
    <property type="project" value="ProtInc"/>
</dbReference>
<dbReference type="GO" id="GO:0007585">
    <property type="term" value="P:respiratory gaseous exchange by respiratory system"/>
    <property type="evidence" value="ECO:0000304"/>
    <property type="project" value="ProtInc"/>
</dbReference>
<dbReference type="GO" id="GO:0006665">
    <property type="term" value="P:sphingolipid metabolic process"/>
    <property type="evidence" value="ECO:0007669"/>
    <property type="project" value="InterPro"/>
</dbReference>
<dbReference type="FunFam" id="1.10.225.10:FF:000008">
    <property type="entry name" value="Pulmonary surfactant-associated protein B"/>
    <property type="match status" value="1"/>
</dbReference>
<dbReference type="FunFam" id="1.10.225.10:FF:000011">
    <property type="entry name" value="Pulmonary surfactant-associated protein B"/>
    <property type="match status" value="1"/>
</dbReference>
<dbReference type="Gene3D" id="1.10.225.10">
    <property type="entry name" value="Saposin-like"/>
    <property type="match status" value="2"/>
</dbReference>
<dbReference type="InterPro" id="IPR003119">
    <property type="entry name" value="SAP_A"/>
</dbReference>
<dbReference type="InterPro" id="IPR007856">
    <property type="entry name" value="SapB_1"/>
</dbReference>
<dbReference type="InterPro" id="IPR008138">
    <property type="entry name" value="SapB_2"/>
</dbReference>
<dbReference type="InterPro" id="IPR008373">
    <property type="entry name" value="Saposin"/>
</dbReference>
<dbReference type="InterPro" id="IPR011001">
    <property type="entry name" value="Saposin-like"/>
</dbReference>
<dbReference type="InterPro" id="IPR008139">
    <property type="entry name" value="SaposinB_dom"/>
</dbReference>
<dbReference type="InterPro" id="IPR051428">
    <property type="entry name" value="Sphingo_Act-Surfact_Prot"/>
</dbReference>
<dbReference type="PANTHER" id="PTHR11480:SF33">
    <property type="entry name" value="PULMONARY SURFACTANT-ASSOCIATED PROTEIN B"/>
    <property type="match status" value="1"/>
</dbReference>
<dbReference type="PANTHER" id="PTHR11480">
    <property type="entry name" value="SAPOSIN-RELATED"/>
    <property type="match status" value="1"/>
</dbReference>
<dbReference type="Pfam" id="PF02199">
    <property type="entry name" value="SapA"/>
    <property type="match status" value="1"/>
</dbReference>
<dbReference type="Pfam" id="PF05184">
    <property type="entry name" value="SapB_1"/>
    <property type="match status" value="1"/>
</dbReference>
<dbReference type="Pfam" id="PF03489">
    <property type="entry name" value="SapB_2"/>
    <property type="match status" value="2"/>
</dbReference>
<dbReference type="PRINTS" id="PR01797">
    <property type="entry name" value="SAPOSIN"/>
</dbReference>
<dbReference type="SMART" id="SM00162">
    <property type="entry name" value="SAPA"/>
    <property type="match status" value="1"/>
</dbReference>
<dbReference type="SMART" id="SM00741">
    <property type="entry name" value="SapB"/>
    <property type="match status" value="3"/>
</dbReference>
<dbReference type="SUPFAM" id="SSF47862">
    <property type="entry name" value="Saposin"/>
    <property type="match status" value="3"/>
</dbReference>
<dbReference type="PROSITE" id="PS51110">
    <property type="entry name" value="SAP_A"/>
    <property type="match status" value="1"/>
</dbReference>
<dbReference type="PROSITE" id="PS50015">
    <property type="entry name" value="SAP_B"/>
    <property type="match status" value="3"/>
</dbReference>
<keyword id="KW-0002">3D-structure</keyword>
<keyword id="KW-0903">Direct protein sequencing</keyword>
<keyword id="KW-0225">Disease variant</keyword>
<keyword id="KW-1015">Disulfide bond</keyword>
<keyword id="KW-0305">Gaseous exchange</keyword>
<keyword id="KW-0325">Glycoprotein</keyword>
<keyword id="KW-1267">Proteomics identification</keyword>
<keyword id="KW-1185">Reference proteome</keyword>
<keyword id="KW-0677">Repeat</keyword>
<keyword id="KW-0964">Secreted</keyword>
<keyword id="KW-0732">Signal</keyword>
<keyword id="KW-0767">Surface film</keyword>
<evidence type="ECO:0000255" key="1"/>
<evidence type="ECO:0000255" key="2">
    <source>
        <dbReference type="PROSITE-ProRule" id="PRU00414"/>
    </source>
</evidence>
<evidence type="ECO:0000255" key="3">
    <source>
        <dbReference type="PROSITE-ProRule" id="PRU00415"/>
    </source>
</evidence>
<evidence type="ECO:0000269" key="4">
    <source>
    </source>
</evidence>
<evidence type="ECO:0000269" key="5">
    <source>
    </source>
</evidence>
<evidence type="ECO:0000269" key="6">
    <source>
    </source>
</evidence>
<evidence type="ECO:0000269" key="7">
    <source>
    </source>
</evidence>
<evidence type="ECO:0000269" key="8">
    <source>
    </source>
</evidence>
<evidence type="ECO:0000269" key="9">
    <source>
    </source>
</evidence>
<evidence type="ECO:0000269" key="10">
    <source ref="3"/>
</evidence>
<evidence type="ECO:0000305" key="11"/>
<evidence type="ECO:0007829" key="12">
    <source>
        <dbReference type="PDB" id="1KMR"/>
    </source>
</evidence>
<evidence type="ECO:0007829" key="13">
    <source>
        <dbReference type="PDB" id="1RG3"/>
    </source>
</evidence>
<evidence type="ECO:0007829" key="14">
    <source>
        <dbReference type="PDB" id="2M0H"/>
    </source>
</evidence>
<reference key="1">
    <citation type="journal article" date="1987" name="J. Biol. Chem.">
        <title>Isolation of a cDNA clone encoding a high molecular weight precursor to a 6-kDa pulmonary surfactant-associated protein.</title>
        <authorList>
            <person name="Jacobs K.A."/>
            <person name="Phelps D.S."/>
            <person name="Steinbrink R."/>
            <person name="Fisch J."/>
            <person name="Kriz R."/>
            <person name="Mitsock L."/>
            <person name="Dougherty J.P."/>
            <person name="Taeusch H.W."/>
            <person name="Floros J."/>
        </authorList>
    </citation>
    <scope>NUCLEOTIDE SEQUENCE [MRNA]</scope>
    <scope>PROTEIN SEQUENCE OF 201-214</scope>
    <source>
        <tissue>Lung</tissue>
    </source>
</reference>
<reference key="2">
    <citation type="journal article" date="1989" name="DNA">
        <title>Structure and organization of the gene encoding human pulmonary surfactant proteolipid SP-B.</title>
        <authorList>
            <person name="Pilot-Matias T.J."/>
            <person name="Kister S.E."/>
            <person name="Fox J.L."/>
            <person name="Kropp K."/>
            <person name="Glasser S.W."/>
            <person name="Whitsett J.A."/>
        </authorList>
    </citation>
    <scope>NUCLEOTIDE SEQUENCE [GENOMIC DNA]</scope>
    <scope>VARIANT ARG-228</scope>
</reference>
<reference key="3">
    <citation type="submission" date="2001-07" db="EMBL/GenBank/DDBJ databases">
        <authorList>
            <consortium name="SeattleSNPs variation discovery resource"/>
        </authorList>
    </citation>
    <scope>NUCLEOTIDE SEQUENCE [GENOMIC DNA]</scope>
    <scope>VARIANTS ILE-131; PHE-176 AND HIS-272</scope>
</reference>
<reference key="4">
    <citation type="journal article" date="2004" name="Genome Res.">
        <title>The status, quality, and expansion of the NIH full-length cDNA project: the Mammalian Gene Collection (MGC).</title>
        <authorList>
            <consortium name="The MGC Project Team"/>
        </authorList>
    </citation>
    <scope>NUCLEOTIDE SEQUENCE [LARGE SCALE MRNA]</scope>
    <source>
        <tissue>Brain</tissue>
    </source>
</reference>
<reference key="5">
    <citation type="journal article" date="1987" name="Proc. Natl. Acad. Sci. U.S.A.">
        <title>cDNA and deduced amino acid sequence of human pulmonary surfactant-associated proteolipid SPL(Phe).</title>
        <authorList>
            <person name="Glasser S.W."/>
            <person name="Korfhagen T.R."/>
            <person name="Weaver T."/>
            <person name="Pilot-Matias T."/>
            <person name="Fox J.L."/>
            <person name="Whitsett J.A."/>
        </authorList>
    </citation>
    <scope>NUCLEOTIDE SEQUENCE [MRNA] OF 99-381</scope>
    <scope>VARIANT ARG-228</scope>
</reference>
<reference key="6">
    <citation type="journal article" date="1988" name="J. Clin. Invest.">
        <title>Use of human surfactant low molecular weight apoproteins in the reconstitution of surfactant biologic activity.</title>
        <authorList>
            <person name="Revak S.D."/>
            <person name="Merritt T.A."/>
            <person name="Degryse E."/>
            <person name="Stefani L."/>
            <person name="Courtney M."/>
            <person name="Hallman M."/>
            <person name="Cochrane C.G."/>
        </authorList>
    </citation>
    <scope>NUCLEOTIDE SEQUENCE [MRNA] OF 139-381</scope>
</reference>
<reference key="7">
    <citation type="journal article" date="1992" name="FEBS Lett.">
        <title>Human surfactant polypeptide SP-B. Disulfide bridges, C-terminal end, and peptide analysis of the airway form.</title>
        <authorList>
            <person name="Johansson J."/>
            <person name="Joernvall H."/>
            <person name="Curstedt T."/>
        </authorList>
    </citation>
    <scope>PROTEIN SEQUENCE OF 201-279</scope>
    <scope>DISULFIDE BONDS</scope>
    <scope>VARIANT ILE-228</scope>
</reference>
<reference key="8">
    <citation type="journal article" date="2000" name="J. Pept. Res.">
        <title>Conformational mapping of the N-terminal segment of surfactant protein B in lipid using 13C-enhanced Fourier transform infrared spectroscopy.</title>
        <authorList>
            <person name="Gordon L.M."/>
            <person name="Lee K.Y."/>
            <person name="Lipp M.M."/>
            <person name="Zasadzinski J.A."/>
            <person name="Walther F.J."/>
            <person name="Sherman M.A."/>
            <person name="Waring A.J."/>
        </authorList>
    </citation>
    <scope>STRUCTURE BY FTIR OF 201-225</scope>
</reference>
<reference key="9">
    <citation type="journal article" date="2007" name="Biochemistry">
        <title>Structure of mini-B, a functional fragment of surfactant protein B, in detergent micelles.</title>
        <authorList>
            <person name="Sarker M."/>
            <person name="Waring A.J."/>
            <person name="Walther F.J."/>
            <person name="Keough K.M."/>
            <person name="Booth V."/>
        </authorList>
    </citation>
    <scope>STRUCTURE BY NMR OF 208-278</scope>
</reference>
<reference key="10">
    <citation type="journal article" date="1995" name="Pediatrics">
        <title>Partial deficiency of surfactant protein B in an infant with chronic lung disease.</title>
        <authorList>
            <person name="Ballard P.L."/>
            <person name="Nogee L.M."/>
            <person name="Beers M.F."/>
            <person name="Ballard R.A."/>
            <person name="Planer B.C."/>
            <person name="Polk L."/>
            <person name="deMello D.E."/>
            <person name="Moxley M.A."/>
            <person name="Longmore W.J."/>
        </authorList>
    </citation>
    <scope>VARIANT SMDP1 CYS-236</scope>
</reference>
<reference key="11">
    <citation type="journal article" date="2000" name="Clin. Genet.">
        <title>Polymorphisms of human SP-A, SP-B, and SP-D genes: association of SP-B Thr131Ile with ARDS.</title>
        <authorList>
            <person name="Lin Z."/>
            <person name="Pearson C."/>
            <person name="Chinchilli V."/>
            <person name="Pietschmann S.M."/>
            <person name="Luo J."/>
            <person name="Pison U."/>
            <person name="Floros J."/>
        </authorList>
    </citation>
    <scope>VARIANT ILE-131</scope>
</reference>
<reference key="12">
    <citation type="journal article" date="2000" name="Hum. Mol. Genet.">
        <title>Surfactant proteins A and B as interactive genetic determinants of neonatal respiratory distress syndrome.</title>
        <authorList>
            <person name="Haataja R."/>
            <person name="Raemet M."/>
            <person name="Marttila R."/>
            <person name="Hallman M."/>
        </authorList>
    </citation>
    <scope>INVOLVEMENT IN SUSCEPTIBILITY TO RDS</scope>
</reference>
<name>PSPB_HUMAN</name>